<sequence length="317" mass="35367">MTDKLTSLRKLTTVVADTGDIAAMKLYQPQDATTNPSLILNAAQIPEYRKLIDEAIAWAREQSDSREQQIVDASDKLAVNIGLEILKLIPGRISTEVDARLSYDSERSVAKAKRLIKLYNEAGISNDRILIKLASTWQGIRAAEQLEKEGINCNLTLLFSFAQARACAEAGVYLISPFVGRILDWYKANSDQKEFAPHEDPGVISVTEIYQYYKQHGYDTVVMGASFRNSGEILELAGCDRLTIAPALLKELSEAQGEVERKLGYAGEIKARPEPLNEAQFYWEHHQDAMATEKLADGIRKFAIDQGKLEKMISDLL</sequence>
<evidence type="ECO:0000250" key="1"/>
<evidence type="ECO:0000255" key="2">
    <source>
        <dbReference type="HAMAP-Rule" id="MF_00492"/>
    </source>
</evidence>
<dbReference type="EC" id="2.2.1.2" evidence="2"/>
<dbReference type="EMBL" id="BX571860">
    <property type="protein sequence ID" value="CAE12863.1"/>
    <property type="molecule type" value="Genomic_DNA"/>
</dbReference>
<dbReference type="RefSeq" id="WP_011144950.1">
    <property type="nucleotide sequence ID" value="NC_005126.1"/>
</dbReference>
<dbReference type="SMR" id="Q7N8Z1"/>
<dbReference type="STRING" id="243265.plu0568"/>
<dbReference type="GeneID" id="48846855"/>
<dbReference type="KEGG" id="plu:plu0568"/>
<dbReference type="eggNOG" id="COG0176">
    <property type="taxonomic scope" value="Bacteria"/>
</dbReference>
<dbReference type="HOGENOM" id="CLU_047470_0_1_6"/>
<dbReference type="OrthoDB" id="9809101at2"/>
<dbReference type="UniPathway" id="UPA00115">
    <property type="reaction ID" value="UER00414"/>
</dbReference>
<dbReference type="Proteomes" id="UP000002514">
    <property type="component" value="Chromosome"/>
</dbReference>
<dbReference type="GO" id="GO:0005829">
    <property type="term" value="C:cytosol"/>
    <property type="evidence" value="ECO:0007669"/>
    <property type="project" value="TreeGrafter"/>
</dbReference>
<dbReference type="GO" id="GO:0004801">
    <property type="term" value="F:transaldolase activity"/>
    <property type="evidence" value="ECO:0000250"/>
    <property type="project" value="UniProtKB"/>
</dbReference>
<dbReference type="GO" id="GO:0005975">
    <property type="term" value="P:carbohydrate metabolic process"/>
    <property type="evidence" value="ECO:0007669"/>
    <property type="project" value="InterPro"/>
</dbReference>
<dbReference type="GO" id="GO:0006098">
    <property type="term" value="P:pentose-phosphate shunt"/>
    <property type="evidence" value="ECO:0007669"/>
    <property type="project" value="UniProtKB-UniRule"/>
</dbReference>
<dbReference type="CDD" id="cd00957">
    <property type="entry name" value="Transaldolase_TalAB"/>
    <property type="match status" value="1"/>
</dbReference>
<dbReference type="FunFam" id="3.20.20.70:FF:000002">
    <property type="entry name" value="Transaldolase"/>
    <property type="match status" value="1"/>
</dbReference>
<dbReference type="Gene3D" id="3.20.20.70">
    <property type="entry name" value="Aldolase class I"/>
    <property type="match status" value="1"/>
</dbReference>
<dbReference type="HAMAP" id="MF_00492">
    <property type="entry name" value="Transaldolase_1"/>
    <property type="match status" value="1"/>
</dbReference>
<dbReference type="InterPro" id="IPR013785">
    <property type="entry name" value="Aldolase_TIM"/>
</dbReference>
<dbReference type="InterPro" id="IPR001585">
    <property type="entry name" value="TAL/FSA"/>
</dbReference>
<dbReference type="InterPro" id="IPR004730">
    <property type="entry name" value="Transaldolase_1"/>
</dbReference>
<dbReference type="InterPro" id="IPR018225">
    <property type="entry name" value="Transaldolase_AS"/>
</dbReference>
<dbReference type="NCBIfam" id="NF009001">
    <property type="entry name" value="PRK12346.1"/>
    <property type="match status" value="1"/>
</dbReference>
<dbReference type="NCBIfam" id="TIGR00874">
    <property type="entry name" value="talAB"/>
    <property type="match status" value="1"/>
</dbReference>
<dbReference type="PANTHER" id="PTHR10683">
    <property type="entry name" value="TRANSALDOLASE"/>
    <property type="match status" value="1"/>
</dbReference>
<dbReference type="PANTHER" id="PTHR10683:SF18">
    <property type="entry name" value="TRANSALDOLASE"/>
    <property type="match status" value="1"/>
</dbReference>
<dbReference type="Pfam" id="PF00923">
    <property type="entry name" value="TAL_FSA"/>
    <property type="match status" value="1"/>
</dbReference>
<dbReference type="SUPFAM" id="SSF51569">
    <property type="entry name" value="Aldolase"/>
    <property type="match status" value="1"/>
</dbReference>
<dbReference type="PROSITE" id="PS01054">
    <property type="entry name" value="TRANSALDOLASE_1"/>
    <property type="match status" value="1"/>
</dbReference>
<dbReference type="PROSITE" id="PS00958">
    <property type="entry name" value="TRANSALDOLASE_2"/>
    <property type="match status" value="1"/>
</dbReference>
<comment type="function">
    <text evidence="2">Transaldolase is important for the balance of metabolites in the pentose-phosphate pathway.</text>
</comment>
<comment type="catalytic activity">
    <reaction evidence="2">
        <text>D-sedoheptulose 7-phosphate + D-glyceraldehyde 3-phosphate = D-erythrose 4-phosphate + beta-D-fructose 6-phosphate</text>
        <dbReference type="Rhea" id="RHEA:17053"/>
        <dbReference type="ChEBI" id="CHEBI:16897"/>
        <dbReference type="ChEBI" id="CHEBI:57483"/>
        <dbReference type="ChEBI" id="CHEBI:57634"/>
        <dbReference type="ChEBI" id="CHEBI:59776"/>
        <dbReference type="EC" id="2.2.1.2"/>
    </reaction>
</comment>
<comment type="pathway">
    <text evidence="2">Carbohydrate degradation; pentose phosphate pathway; D-glyceraldehyde 3-phosphate and beta-D-fructose 6-phosphate from D-ribose 5-phosphate and D-xylulose 5-phosphate (non-oxidative stage): step 2/3.</text>
</comment>
<comment type="subunit">
    <text evidence="1">Homodimer.</text>
</comment>
<comment type="subcellular location">
    <subcellularLocation>
        <location evidence="2">Cytoplasm</location>
    </subcellularLocation>
</comment>
<comment type="similarity">
    <text evidence="2">Belongs to the transaldolase family. Type 1 subfamily.</text>
</comment>
<accession>Q7N8Z1</accession>
<organism>
    <name type="scientific">Photorhabdus laumondii subsp. laumondii (strain DSM 15139 / CIP 105565 / TT01)</name>
    <name type="common">Photorhabdus luminescens subsp. laumondii</name>
    <dbReference type="NCBI Taxonomy" id="243265"/>
    <lineage>
        <taxon>Bacteria</taxon>
        <taxon>Pseudomonadati</taxon>
        <taxon>Pseudomonadota</taxon>
        <taxon>Gammaproteobacteria</taxon>
        <taxon>Enterobacterales</taxon>
        <taxon>Morganellaceae</taxon>
        <taxon>Photorhabdus</taxon>
    </lineage>
</organism>
<protein>
    <recommendedName>
        <fullName evidence="2">Transaldolase</fullName>
        <ecNumber evidence="2">2.2.1.2</ecNumber>
    </recommendedName>
</protein>
<keyword id="KW-0963">Cytoplasm</keyword>
<keyword id="KW-0570">Pentose shunt</keyword>
<keyword id="KW-1185">Reference proteome</keyword>
<keyword id="KW-0704">Schiff base</keyword>
<keyword id="KW-0808">Transferase</keyword>
<name>TAL_PHOLL</name>
<gene>
    <name evidence="2" type="primary">tal</name>
    <name type="synonym">talB</name>
    <name type="ordered locus">plu0568</name>
</gene>
<feature type="chain" id="PRO_0000173603" description="Transaldolase">
    <location>
        <begin position="1"/>
        <end position="317"/>
    </location>
</feature>
<feature type="active site" description="Schiff-base intermediate with substrate" evidence="2">
    <location>
        <position position="132"/>
    </location>
</feature>
<reference key="1">
    <citation type="journal article" date="2003" name="Nat. Biotechnol.">
        <title>The genome sequence of the entomopathogenic bacterium Photorhabdus luminescens.</title>
        <authorList>
            <person name="Duchaud E."/>
            <person name="Rusniok C."/>
            <person name="Frangeul L."/>
            <person name="Buchrieser C."/>
            <person name="Givaudan A."/>
            <person name="Taourit S."/>
            <person name="Bocs S."/>
            <person name="Boursaux-Eude C."/>
            <person name="Chandler M."/>
            <person name="Charles J.-F."/>
            <person name="Dassa E."/>
            <person name="Derose R."/>
            <person name="Derzelle S."/>
            <person name="Freyssinet G."/>
            <person name="Gaudriault S."/>
            <person name="Medigue C."/>
            <person name="Lanois A."/>
            <person name="Powell K."/>
            <person name="Siguier P."/>
            <person name="Vincent R."/>
            <person name="Wingate V."/>
            <person name="Zouine M."/>
            <person name="Glaser P."/>
            <person name="Boemare N."/>
            <person name="Danchin A."/>
            <person name="Kunst F."/>
        </authorList>
    </citation>
    <scope>NUCLEOTIDE SEQUENCE [LARGE SCALE GENOMIC DNA]</scope>
    <source>
        <strain>DSM 15139 / CIP 105565 / TT01</strain>
    </source>
</reference>
<proteinExistence type="inferred from homology"/>